<protein>
    <recommendedName>
        <fullName>Basic phospholipase A2 2</fullName>
        <shortName>svPLA2</shortName>
        <ecNumber>3.1.1.4</ecNumber>
    </recommendedName>
    <alternativeName>
        <fullName>PLA2-II</fullName>
    </alternativeName>
    <alternativeName>
        <fullName>Phosphatidylcholine 2-acylhydrolase</fullName>
    </alternativeName>
</protein>
<keyword id="KW-0106">Calcium</keyword>
<keyword id="KW-0903">Direct protein sequencing</keyword>
<keyword id="KW-1015">Disulfide bond</keyword>
<keyword id="KW-0378">Hydrolase</keyword>
<keyword id="KW-0442">Lipid degradation</keyword>
<keyword id="KW-0443">Lipid metabolism</keyword>
<keyword id="KW-0479">Metal-binding</keyword>
<keyword id="KW-0959">Myotoxin</keyword>
<keyword id="KW-0964">Secreted</keyword>
<keyword id="KW-0800">Toxin</keyword>
<feature type="chain" id="PRO_0000161708" description="Basic phospholipase A2 2">
    <location>
        <begin position="1"/>
        <end position="70" status="greater than"/>
    </location>
</feature>
<feature type="active site" evidence="2 3">
    <location>
        <position position="47"/>
    </location>
</feature>
<feature type="binding site" evidence="1">
    <location>
        <position position="48"/>
    </location>
    <ligand>
        <name>Ca(2+)</name>
        <dbReference type="ChEBI" id="CHEBI:29108"/>
    </ligand>
</feature>
<feature type="disulfide bond" evidence="1">
    <location>
        <begin position="28"/>
        <end position="44"/>
    </location>
</feature>
<feature type="non-terminal residue">
    <location>
        <position position="70"/>
    </location>
</feature>
<reference key="1">
    <citation type="journal article" date="2003" name="J. Hubei Univ.">
        <title>Isolation and sequencing of five variants of phospholipase A2 from venom of snake Trimeresurus stejnegeri.</title>
        <authorList>
            <person name="Li S.-Y."/>
            <person name="Guo Z.-X."/>
            <person name="Yang Y.-Y."/>
            <person name="Wang W.-Y."/>
            <person name="Xiong Y.-L."/>
        </authorList>
    </citation>
    <scope>PROTEIN SEQUENCE</scope>
    <scope>FUNCTION</scope>
    <source>
        <tissue>Venom</tissue>
    </source>
</reference>
<organism>
    <name type="scientific">Trimeresurus stejnegeri</name>
    <name type="common">Chinese green tree viper</name>
    <name type="synonym">Viridovipera stejnegeri</name>
    <dbReference type="NCBI Taxonomy" id="39682"/>
    <lineage>
        <taxon>Eukaryota</taxon>
        <taxon>Metazoa</taxon>
        <taxon>Chordata</taxon>
        <taxon>Craniata</taxon>
        <taxon>Vertebrata</taxon>
        <taxon>Euteleostomi</taxon>
        <taxon>Lepidosauria</taxon>
        <taxon>Squamata</taxon>
        <taxon>Bifurcata</taxon>
        <taxon>Unidentata</taxon>
        <taxon>Episquamata</taxon>
        <taxon>Toxicofera</taxon>
        <taxon>Serpentes</taxon>
        <taxon>Colubroidea</taxon>
        <taxon>Viperidae</taxon>
        <taxon>Crotalinae</taxon>
        <taxon>Trimeresurus</taxon>
    </lineage>
</organism>
<proteinExistence type="evidence at protein level"/>
<name>PA2B2_TRIST</name>
<evidence type="ECO:0000250" key="1"/>
<evidence type="ECO:0000255" key="2">
    <source>
        <dbReference type="PROSITE-ProRule" id="PRU10035"/>
    </source>
</evidence>
<evidence type="ECO:0000255" key="3">
    <source>
        <dbReference type="PROSITE-ProRule" id="PRU10036"/>
    </source>
</evidence>
<evidence type="ECO:0000269" key="4">
    <source ref="1"/>
</evidence>
<evidence type="ECO:0000305" key="5"/>
<sequence>SLLQLRKMIKKMTNKEPILSYSKYGCNCGMAGRGKPVDATDXCCXXHDCCYGKVTSCSTKADSYSYSWEE</sequence>
<accession>P82893</accession>
<comment type="function">
    <text evidence="4">Snake venom phospholipase A2 (PLA2) that exhibits strong myotoxicity. PLA2 catalyzes the calcium-dependent hydrolysis of the 2-acyl groups in 3-sn-phosphoglycerides.</text>
</comment>
<comment type="catalytic activity">
    <reaction evidence="2 3">
        <text>a 1,2-diacyl-sn-glycero-3-phosphocholine + H2O = a 1-acyl-sn-glycero-3-phosphocholine + a fatty acid + H(+)</text>
        <dbReference type="Rhea" id="RHEA:15801"/>
        <dbReference type="ChEBI" id="CHEBI:15377"/>
        <dbReference type="ChEBI" id="CHEBI:15378"/>
        <dbReference type="ChEBI" id="CHEBI:28868"/>
        <dbReference type="ChEBI" id="CHEBI:57643"/>
        <dbReference type="ChEBI" id="CHEBI:58168"/>
        <dbReference type="EC" id="3.1.1.4"/>
    </reaction>
</comment>
<comment type="cofactor">
    <cofactor evidence="1">
        <name>Ca(2+)</name>
        <dbReference type="ChEBI" id="CHEBI:29108"/>
    </cofactor>
    <text evidence="1">Binds 1 Ca(2+) ion.</text>
</comment>
<comment type="subcellular location">
    <subcellularLocation>
        <location>Secreted</location>
    </subcellularLocation>
</comment>
<comment type="tissue specificity">
    <text>Expressed by the venom gland.</text>
</comment>
<comment type="miscellaneous">
    <text>Hemolytic and neurotoxic activities are not detected (Ref.1).</text>
</comment>
<comment type="similarity">
    <text evidence="5">Belongs to the phospholipase A2 family. Group II subfamily. D49 sub-subfamily.</text>
</comment>
<dbReference type="EC" id="3.1.1.4"/>
<dbReference type="GO" id="GO:0005576">
    <property type="term" value="C:extracellular region"/>
    <property type="evidence" value="ECO:0007669"/>
    <property type="project" value="UniProtKB-SubCell"/>
</dbReference>
<dbReference type="GO" id="GO:0005509">
    <property type="term" value="F:calcium ion binding"/>
    <property type="evidence" value="ECO:0007669"/>
    <property type="project" value="InterPro"/>
</dbReference>
<dbReference type="GO" id="GO:0047498">
    <property type="term" value="F:calcium-dependent phospholipase A2 activity"/>
    <property type="evidence" value="ECO:0007669"/>
    <property type="project" value="TreeGrafter"/>
</dbReference>
<dbReference type="GO" id="GO:0005543">
    <property type="term" value="F:phospholipid binding"/>
    <property type="evidence" value="ECO:0007669"/>
    <property type="project" value="TreeGrafter"/>
</dbReference>
<dbReference type="GO" id="GO:0090729">
    <property type="term" value="F:toxin activity"/>
    <property type="evidence" value="ECO:0007669"/>
    <property type="project" value="UniProtKB-KW"/>
</dbReference>
<dbReference type="GO" id="GO:0050482">
    <property type="term" value="P:arachidonate secretion"/>
    <property type="evidence" value="ECO:0007669"/>
    <property type="project" value="InterPro"/>
</dbReference>
<dbReference type="GO" id="GO:0016042">
    <property type="term" value="P:lipid catabolic process"/>
    <property type="evidence" value="ECO:0007669"/>
    <property type="project" value="UniProtKB-KW"/>
</dbReference>
<dbReference type="GO" id="GO:0042130">
    <property type="term" value="P:negative regulation of T cell proliferation"/>
    <property type="evidence" value="ECO:0007669"/>
    <property type="project" value="TreeGrafter"/>
</dbReference>
<dbReference type="GO" id="GO:0006644">
    <property type="term" value="P:phospholipid metabolic process"/>
    <property type="evidence" value="ECO:0007669"/>
    <property type="project" value="InterPro"/>
</dbReference>
<dbReference type="CDD" id="cd00125">
    <property type="entry name" value="PLA2c"/>
    <property type="match status" value="1"/>
</dbReference>
<dbReference type="Gene3D" id="1.20.90.10">
    <property type="entry name" value="Phospholipase A2 domain"/>
    <property type="match status" value="1"/>
</dbReference>
<dbReference type="InterPro" id="IPR001211">
    <property type="entry name" value="PLipase_A2"/>
</dbReference>
<dbReference type="InterPro" id="IPR016090">
    <property type="entry name" value="PLipase_A2_dom"/>
</dbReference>
<dbReference type="InterPro" id="IPR036444">
    <property type="entry name" value="PLipase_A2_dom_sf"/>
</dbReference>
<dbReference type="InterPro" id="IPR033113">
    <property type="entry name" value="PLipase_A2_His_AS"/>
</dbReference>
<dbReference type="PANTHER" id="PTHR11716">
    <property type="entry name" value="PHOSPHOLIPASE A2 FAMILY MEMBER"/>
    <property type="match status" value="1"/>
</dbReference>
<dbReference type="PANTHER" id="PTHR11716:SF9">
    <property type="entry name" value="PHOSPHOLIPASE A2, MEMBRANE ASSOCIATED"/>
    <property type="match status" value="1"/>
</dbReference>
<dbReference type="Pfam" id="PF00068">
    <property type="entry name" value="Phospholip_A2_1"/>
    <property type="match status" value="1"/>
</dbReference>
<dbReference type="PRINTS" id="PR00389">
    <property type="entry name" value="PHPHLIPASEA2"/>
</dbReference>
<dbReference type="SMART" id="SM00085">
    <property type="entry name" value="PA2c"/>
    <property type="match status" value="1"/>
</dbReference>
<dbReference type="SUPFAM" id="SSF48619">
    <property type="entry name" value="Phospholipase A2, PLA2"/>
    <property type="match status" value="1"/>
</dbReference>
<dbReference type="PROSITE" id="PS00118">
    <property type="entry name" value="PA2_HIS"/>
    <property type="match status" value="1"/>
</dbReference>